<proteinExistence type="inferred from homology"/>
<keyword id="KW-0378">Hydrolase</keyword>
<keyword id="KW-0904">Protein phosphatase</keyword>
<keyword id="KW-1185">Reference proteome</keyword>
<reference key="1">
    <citation type="journal article" date="2005" name="J. Bacteriol.">
        <title>Insights on evolution of virulence and resistance from the complete genome analysis of an early methicillin-resistant Staphylococcus aureus strain and a biofilm-producing methicillin-resistant Staphylococcus epidermidis strain.</title>
        <authorList>
            <person name="Gill S.R."/>
            <person name="Fouts D.E."/>
            <person name="Archer G.L."/>
            <person name="Mongodin E.F."/>
            <person name="DeBoy R.T."/>
            <person name="Ravel J."/>
            <person name="Paulsen I.T."/>
            <person name="Kolonay J.F."/>
            <person name="Brinkac L.M."/>
            <person name="Beanan M.J."/>
            <person name="Dodson R.J."/>
            <person name="Daugherty S.C."/>
            <person name="Madupu R."/>
            <person name="Angiuoli S.V."/>
            <person name="Durkin A.S."/>
            <person name="Haft D.H."/>
            <person name="Vamathevan J.J."/>
            <person name="Khouri H."/>
            <person name="Utterback T.R."/>
            <person name="Lee C."/>
            <person name="Dimitrov G."/>
            <person name="Jiang L."/>
            <person name="Qin H."/>
            <person name="Weidman J."/>
            <person name="Tran K."/>
            <person name="Kang K.H."/>
            <person name="Hance I.R."/>
            <person name="Nelson K.E."/>
            <person name="Fraser C.M."/>
        </authorList>
    </citation>
    <scope>NUCLEOTIDE SEQUENCE [LARGE SCALE GENOMIC DNA]</scope>
    <source>
        <strain>ATCC 35984 / DSM 28319 / BCRC 17069 / CCUG 31568 / BM 3577 / RP62A</strain>
    </source>
</reference>
<organism>
    <name type="scientific">Staphylococcus epidermidis (strain ATCC 35984 / DSM 28319 / BCRC 17069 / CCUG 31568 / BM 3577 / RP62A)</name>
    <dbReference type="NCBI Taxonomy" id="176279"/>
    <lineage>
        <taxon>Bacteria</taxon>
        <taxon>Bacillati</taxon>
        <taxon>Bacillota</taxon>
        <taxon>Bacilli</taxon>
        <taxon>Bacillales</taxon>
        <taxon>Staphylococcaceae</taxon>
        <taxon>Staphylococcus</taxon>
    </lineage>
</organism>
<protein>
    <recommendedName>
        <fullName>Low molecular weight protein-tyrosine-phosphatase PtpA</fullName>
        <ecNumber>3.1.3.48</ecNumber>
    </recommendedName>
    <alternativeName>
        <fullName>Phosphotyrosine phosphatase A</fullName>
        <shortName>PTPase A</shortName>
    </alternativeName>
</protein>
<gene>
    <name type="primary">ptpA</name>
    <name type="ordered locus">SERP1419</name>
</gene>
<name>PTPA_STAEQ</name>
<feature type="chain" id="PRO_0000300667" description="Low molecular weight protein-tyrosine-phosphatase PtpA">
    <location>
        <begin position="1"/>
        <end position="154"/>
    </location>
</feature>
<feature type="active site" description="Nucleophile" evidence="2">
    <location>
        <position position="8"/>
    </location>
</feature>
<feature type="active site" evidence="2">
    <location>
        <position position="14"/>
    </location>
</feature>
<feature type="active site" description="Proton donor" evidence="2">
    <location>
        <position position="120"/>
    </location>
</feature>
<sequence length="154" mass="17760">MIHVAFVCLGNICRSPMAEAIMRQRLQERGISDIKVHSRGTGRWNLGEPPHNGTQKILQKYHIPYDGMVSELFEPDDDFDYIIAMDQSNVDNIKQINPNLQGQLFKLLEFSNMEESDVPDPYYTNNFEGVFEMVQSSCDNLIDYIVKDANLKER</sequence>
<dbReference type="EC" id="3.1.3.48"/>
<dbReference type="EMBL" id="CP000029">
    <property type="protein sequence ID" value="AAW54783.1"/>
    <property type="molecule type" value="Genomic_DNA"/>
</dbReference>
<dbReference type="RefSeq" id="WP_001830437.1">
    <property type="nucleotide sequence ID" value="NC_002976.3"/>
</dbReference>
<dbReference type="SMR" id="Q5HN53"/>
<dbReference type="STRING" id="176279.SERP1419"/>
<dbReference type="KEGG" id="ser:SERP1419"/>
<dbReference type="eggNOG" id="COG0394">
    <property type="taxonomic scope" value="Bacteria"/>
</dbReference>
<dbReference type="HOGENOM" id="CLU_071415_2_3_9"/>
<dbReference type="Proteomes" id="UP000000531">
    <property type="component" value="Chromosome"/>
</dbReference>
<dbReference type="GO" id="GO:0004725">
    <property type="term" value="F:protein tyrosine phosphatase activity"/>
    <property type="evidence" value="ECO:0007669"/>
    <property type="project" value="UniProtKB-EC"/>
</dbReference>
<dbReference type="CDD" id="cd16343">
    <property type="entry name" value="LMWPTP"/>
    <property type="match status" value="1"/>
</dbReference>
<dbReference type="Gene3D" id="3.40.50.2300">
    <property type="match status" value="1"/>
</dbReference>
<dbReference type="InterPro" id="IPR050438">
    <property type="entry name" value="LMW_PTPase"/>
</dbReference>
<dbReference type="InterPro" id="IPR023485">
    <property type="entry name" value="Ptyr_pPase"/>
</dbReference>
<dbReference type="InterPro" id="IPR036196">
    <property type="entry name" value="Ptyr_pPase_sf"/>
</dbReference>
<dbReference type="InterPro" id="IPR017867">
    <property type="entry name" value="Tyr_phospatase_low_mol_wt"/>
</dbReference>
<dbReference type="PANTHER" id="PTHR11717:SF7">
    <property type="entry name" value="LOW MOLECULAR WEIGHT PHOSPHOTYROSINE PROTEIN PHOSPHATASE"/>
    <property type="match status" value="1"/>
</dbReference>
<dbReference type="PANTHER" id="PTHR11717">
    <property type="entry name" value="LOW MOLECULAR WEIGHT PROTEIN TYROSINE PHOSPHATASE"/>
    <property type="match status" value="1"/>
</dbReference>
<dbReference type="Pfam" id="PF01451">
    <property type="entry name" value="LMWPc"/>
    <property type="match status" value="1"/>
</dbReference>
<dbReference type="PRINTS" id="PR00719">
    <property type="entry name" value="LMWPTPASE"/>
</dbReference>
<dbReference type="SMART" id="SM00226">
    <property type="entry name" value="LMWPc"/>
    <property type="match status" value="1"/>
</dbReference>
<dbReference type="SUPFAM" id="SSF52788">
    <property type="entry name" value="Phosphotyrosine protein phosphatases I"/>
    <property type="match status" value="1"/>
</dbReference>
<evidence type="ECO:0000250" key="1"/>
<evidence type="ECO:0000250" key="2">
    <source>
        <dbReference type="UniProtKB" id="P11064"/>
    </source>
</evidence>
<evidence type="ECO:0000305" key="3"/>
<comment type="function">
    <text evidence="1">Dephosphorylates the phosphotyrosine-containing proteins.</text>
</comment>
<comment type="catalytic activity">
    <reaction>
        <text>O-phospho-L-tyrosyl-[protein] + H2O = L-tyrosyl-[protein] + phosphate</text>
        <dbReference type="Rhea" id="RHEA:10684"/>
        <dbReference type="Rhea" id="RHEA-COMP:10136"/>
        <dbReference type="Rhea" id="RHEA-COMP:20101"/>
        <dbReference type="ChEBI" id="CHEBI:15377"/>
        <dbReference type="ChEBI" id="CHEBI:43474"/>
        <dbReference type="ChEBI" id="CHEBI:46858"/>
        <dbReference type="ChEBI" id="CHEBI:61978"/>
        <dbReference type="EC" id="3.1.3.48"/>
    </reaction>
</comment>
<comment type="similarity">
    <text evidence="3">Belongs to the low molecular weight phosphotyrosine protein phosphatase family.</text>
</comment>
<accession>Q5HN53</accession>